<keyword id="KW-0025">Alternative splicing</keyword>
<keyword id="KW-1003">Cell membrane</keyword>
<keyword id="KW-1015">Disulfide bond</keyword>
<keyword id="KW-0325">Glycoprotein</keyword>
<keyword id="KW-0391">Immunity</keyword>
<keyword id="KW-0399">Innate immunity</keyword>
<keyword id="KW-0472">Membrane</keyword>
<keyword id="KW-1185">Reference proteome</keyword>
<keyword id="KW-0812">Transmembrane</keyword>
<keyword id="KW-1133">Transmembrane helix</keyword>
<proteinExistence type="evidence at protein level"/>
<comment type="function">
    <text evidence="1">Peptidoglycan-recognition protein probably involved in innate immunity by binding to peptidoglycans (PGN) of bacteria and activating the immune response.</text>
</comment>
<comment type="subcellular location">
    <subcellularLocation>
        <location evidence="8">Cell membrane</location>
        <topology evidence="8">Single-pass membrane protein</topology>
    </subcellularLocation>
</comment>
<comment type="alternative products">
    <event type="alternative splicing"/>
    <isoform>
        <id>Q95T64-1</id>
        <name>1</name>
        <sequence type="displayed"/>
    </isoform>
    <isoform>
        <id>Q95T64-2</id>
        <name>2</name>
        <name>LAb</name>
        <name>B</name>
        <name>F</name>
        <sequence type="described" ref="VSP_013590 VSP_013591"/>
    </isoform>
    <isoform>
        <id>Q95T64-3</id>
        <name>3</name>
        <name>LAc</name>
        <name>C</name>
        <sequence type="described" ref="VSP_013589"/>
    </isoform>
    <isoform>
        <id>Q95T64-4</id>
        <name>4</name>
        <name>LAa</name>
        <name>a1</name>
        <name>D</name>
        <sequence type="described" ref="VSP_013592"/>
    </isoform>
</comment>
<comment type="tissue specificity">
    <text evidence="4">Expressed in uninduced hemocytes and mbn-2 cells.</text>
</comment>
<comment type="developmental stage">
    <text evidence="4">Expressed from old embryos. Expressed in larvae and adults.</text>
</comment>
<comment type="similarity">
    <text evidence="8">Belongs to the N-acetylmuramoyl-L-alanine amidase 2 family.</text>
</comment>
<organism>
    <name type="scientific">Drosophila melanogaster</name>
    <name type="common">Fruit fly</name>
    <dbReference type="NCBI Taxonomy" id="7227"/>
    <lineage>
        <taxon>Eukaryota</taxon>
        <taxon>Metazoa</taxon>
        <taxon>Ecdysozoa</taxon>
        <taxon>Arthropoda</taxon>
        <taxon>Hexapoda</taxon>
        <taxon>Insecta</taxon>
        <taxon>Pterygota</taxon>
        <taxon>Neoptera</taxon>
        <taxon>Endopterygota</taxon>
        <taxon>Diptera</taxon>
        <taxon>Brachycera</taxon>
        <taxon>Muscomorpha</taxon>
        <taxon>Ephydroidea</taxon>
        <taxon>Drosophilidae</taxon>
        <taxon>Drosophila</taxon>
        <taxon>Sophophora</taxon>
    </lineage>
</organism>
<feature type="chain" id="PRO_0000220623" description="Peptidoglycan-recognition protein LA">
    <location>
        <begin position="1"/>
        <end position="368"/>
    </location>
</feature>
<feature type="topological domain" description="Cytoplasmic" evidence="2">
    <location>
        <begin position="1"/>
        <end position="127"/>
    </location>
</feature>
<feature type="transmembrane region" description="Helical" evidence="2">
    <location>
        <begin position="128"/>
        <end position="148"/>
    </location>
</feature>
<feature type="topological domain" description="Extracellular" evidence="2">
    <location>
        <begin position="149"/>
        <end position="368"/>
    </location>
</feature>
<feature type="domain" description="N-acetylmuramoyl-L-alanine amidase" evidence="2">
    <location>
        <begin position="233"/>
        <end position="320"/>
    </location>
</feature>
<feature type="region of interest" description="Disordered" evidence="3">
    <location>
        <begin position="21"/>
        <end position="46"/>
    </location>
</feature>
<feature type="region of interest" description="Disordered" evidence="3">
    <location>
        <begin position="101"/>
        <end position="122"/>
    </location>
</feature>
<feature type="compositionally biased region" description="Low complexity" evidence="3">
    <location>
        <begin position="33"/>
        <end position="43"/>
    </location>
</feature>
<feature type="compositionally biased region" description="Low complexity" evidence="3">
    <location>
        <begin position="102"/>
        <end position="113"/>
    </location>
</feature>
<feature type="glycosylation site" description="N-linked (GlcNAc...) asparagine" evidence="2">
    <location>
        <position position="273"/>
    </location>
</feature>
<feature type="glycosylation site" description="N-linked (GlcNAc...) asparagine" evidence="5">
    <location>
        <position position="320"/>
    </location>
</feature>
<feature type="disulfide bond" evidence="1">
    <location>
        <begin position="221"/>
        <end position="227"/>
    </location>
</feature>
<feature type="splice variant" id="VSP_013589" description="In isoform 3." evidence="6">
    <location>
        <begin position="1"/>
        <end position="230"/>
    </location>
</feature>
<feature type="splice variant" id="VSP_013590" description="In isoform 2." evidence="6 7">
    <location>
        <begin position="1"/>
        <end position="69"/>
    </location>
</feature>
<feature type="splice variant" id="VSP_013591" description="In isoform 2." evidence="6 7">
    <original>VVIGPMTQYQGPVSIYYMDYMEAHAMQTAAG</original>
    <variation>MKLLLKVHSERTARRRRTPEPSLAHSRDSSR</variation>
    <location>
        <begin position="70"/>
        <end position="100"/>
    </location>
</feature>
<feature type="splice variant" id="VSP_013592" description="In isoform 4." evidence="6 7">
    <location>
        <begin position="174"/>
        <end position="368"/>
    </location>
</feature>
<feature type="sequence conflict" description="In Ref. 1; AAK00295." evidence="8" ref="1">
    <original>S</original>
    <variation>C</variation>
    <location>
        <position position="34"/>
    </location>
</feature>
<feature type="sequence conflict" description="In Ref. 1; AAK00295." evidence="8" ref="1">
    <original>P</original>
    <variation>S</variation>
    <location>
        <position position="45"/>
    </location>
</feature>
<feature type="sequence conflict" description="In Ref. 1; AAK00295." evidence="8" ref="1">
    <original>N</original>
    <variation>D</variation>
    <location>
        <position position="167"/>
    </location>
</feature>
<evidence type="ECO:0000250" key="1"/>
<evidence type="ECO:0000255" key="2"/>
<evidence type="ECO:0000256" key="3">
    <source>
        <dbReference type="SAM" id="MobiDB-lite"/>
    </source>
</evidence>
<evidence type="ECO:0000269" key="4">
    <source>
    </source>
</evidence>
<evidence type="ECO:0000269" key="5">
    <source>
    </source>
</evidence>
<evidence type="ECO:0000303" key="6">
    <source>
    </source>
</evidence>
<evidence type="ECO:0000303" key="7">
    <source>
    </source>
</evidence>
<evidence type="ECO:0000305" key="8"/>
<protein>
    <recommendedName>
        <fullName>Peptidoglycan-recognition protein LA</fullName>
    </recommendedName>
</protein>
<name>PGPLA_DROME</name>
<reference key="1">
    <citation type="journal article" date="2000" name="Proc. Natl. Acad. Sci. U.S.A.">
        <title>A family of peptidoglycan recognition proteins in the fruit fly Drosophila melanogaster.</title>
        <authorList>
            <person name="Werner T."/>
            <person name="Liu G."/>
            <person name="Kang D."/>
            <person name="Ekengren S."/>
            <person name="Steiner H."/>
            <person name="Hultmark D."/>
        </authorList>
    </citation>
    <scope>NUCLEOTIDE SEQUENCE [MRNA] (ISOFORMS 2; 3 AND 4)</scope>
    <scope>TISSUE SPECIFICITY</scope>
    <scope>DEVELOPMENTAL STAGE</scope>
</reference>
<reference key="2">
    <citation type="journal article" date="2000" name="Science">
        <title>The genome sequence of Drosophila melanogaster.</title>
        <authorList>
            <person name="Adams M.D."/>
            <person name="Celniker S.E."/>
            <person name="Holt R.A."/>
            <person name="Evans C.A."/>
            <person name="Gocayne J.D."/>
            <person name="Amanatides P.G."/>
            <person name="Scherer S.E."/>
            <person name="Li P.W."/>
            <person name="Hoskins R.A."/>
            <person name="Galle R.F."/>
            <person name="George R.A."/>
            <person name="Lewis S.E."/>
            <person name="Richards S."/>
            <person name="Ashburner M."/>
            <person name="Henderson S.N."/>
            <person name="Sutton G.G."/>
            <person name="Wortman J.R."/>
            <person name="Yandell M.D."/>
            <person name="Zhang Q."/>
            <person name="Chen L.X."/>
            <person name="Brandon R.C."/>
            <person name="Rogers Y.-H.C."/>
            <person name="Blazej R.G."/>
            <person name="Champe M."/>
            <person name="Pfeiffer B.D."/>
            <person name="Wan K.H."/>
            <person name="Doyle C."/>
            <person name="Baxter E.G."/>
            <person name="Helt G."/>
            <person name="Nelson C.R."/>
            <person name="Miklos G.L.G."/>
            <person name="Abril J.F."/>
            <person name="Agbayani A."/>
            <person name="An H.-J."/>
            <person name="Andrews-Pfannkoch C."/>
            <person name="Baldwin D."/>
            <person name="Ballew R.M."/>
            <person name="Basu A."/>
            <person name="Baxendale J."/>
            <person name="Bayraktaroglu L."/>
            <person name="Beasley E.M."/>
            <person name="Beeson K.Y."/>
            <person name="Benos P.V."/>
            <person name="Berman B.P."/>
            <person name="Bhandari D."/>
            <person name="Bolshakov S."/>
            <person name="Borkova D."/>
            <person name="Botchan M.R."/>
            <person name="Bouck J."/>
            <person name="Brokstein P."/>
            <person name="Brottier P."/>
            <person name="Burtis K.C."/>
            <person name="Busam D.A."/>
            <person name="Butler H."/>
            <person name="Cadieu E."/>
            <person name="Center A."/>
            <person name="Chandra I."/>
            <person name="Cherry J.M."/>
            <person name="Cawley S."/>
            <person name="Dahlke C."/>
            <person name="Davenport L.B."/>
            <person name="Davies P."/>
            <person name="de Pablos B."/>
            <person name="Delcher A."/>
            <person name="Deng Z."/>
            <person name="Mays A.D."/>
            <person name="Dew I."/>
            <person name="Dietz S.M."/>
            <person name="Dodson K."/>
            <person name="Doup L.E."/>
            <person name="Downes M."/>
            <person name="Dugan-Rocha S."/>
            <person name="Dunkov B.C."/>
            <person name="Dunn P."/>
            <person name="Durbin K.J."/>
            <person name="Evangelista C.C."/>
            <person name="Ferraz C."/>
            <person name="Ferriera S."/>
            <person name="Fleischmann W."/>
            <person name="Fosler C."/>
            <person name="Gabrielian A.E."/>
            <person name="Garg N.S."/>
            <person name="Gelbart W.M."/>
            <person name="Glasser K."/>
            <person name="Glodek A."/>
            <person name="Gong F."/>
            <person name="Gorrell J.H."/>
            <person name="Gu Z."/>
            <person name="Guan P."/>
            <person name="Harris M."/>
            <person name="Harris N.L."/>
            <person name="Harvey D.A."/>
            <person name="Heiman T.J."/>
            <person name="Hernandez J.R."/>
            <person name="Houck J."/>
            <person name="Hostin D."/>
            <person name="Houston K.A."/>
            <person name="Howland T.J."/>
            <person name="Wei M.-H."/>
            <person name="Ibegwam C."/>
            <person name="Jalali M."/>
            <person name="Kalush F."/>
            <person name="Karpen G.H."/>
            <person name="Ke Z."/>
            <person name="Kennison J.A."/>
            <person name="Ketchum K.A."/>
            <person name="Kimmel B.E."/>
            <person name="Kodira C.D."/>
            <person name="Kraft C.L."/>
            <person name="Kravitz S."/>
            <person name="Kulp D."/>
            <person name="Lai Z."/>
            <person name="Lasko P."/>
            <person name="Lei Y."/>
            <person name="Levitsky A.A."/>
            <person name="Li J.H."/>
            <person name="Li Z."/>
            <person name="Liang Y."/>
            <person name="Lin X."/>
            <person name="Liu X."/>
            <person name="Mattei B."/>
            <person name="McIntosh T.C."/>
            <person name="McLeod M.P."/>
            <person name="McPherson D."/>
            <person name="Merkulov G."/>
            <person name="Milshina N.V."/>
            <person name="Mobarry C."/>
            <person name="Morris J."/>
            <person name="Moshrefi A."/>
            <person name="Mount S.M."/>
            <person name="Moy M."/>
            <person name="Murphy B."/>
            <person name="Murphy L."/>
            <person name="Muzny D.M."/>
            <person name="Nelson D.L."/>
            <person name="Nelson D.R."/>
            <person name="Nelson K.A."/>
            <person name="Nixon K."/>
            <person name="Nusskern D.R."/>
            <person name="Pacleb J.M."/>
            <person name="Palazzolo M."/>
            <person name="Pittman G.S."/>
            <person name="Pan S."/>
            <person name="Pollard J."/>
            <person name="Puri V."/>
            <person name="Reese M.G."/>
            <person name="Reinert K."/>
            <person name="Remington K."/>
            <person name="Saunders R.D.C."/>
            <person name="Scheeler F."/>
            <person name="Shen H."/>
            <person name="Shue B.C."/>
            <person name="Siden-Kiamos I."/>
            <person name="Simpson M."/>
            <person name="Skupski M.P."/>
            <person name="Smith T.J."/>
            <person name="Spier E."/>
            <person name="Spradling A.C."/>
            <person name="Stapleton M."/>
            <person name="Strong R."/>
            <person name="Sun E."/>
            <person name="Svirskas R."/>
            <person name="Tector C."/>
            <person name="Turner R."/>
            <person name="Venter E."/>
            <person name="Wang A.H."/>
            <person name="Wang X."/>
            <person name="Wang Z.-Y."/>
            <person name="Wassarman D.A."/>
            <person name="Weinstock G.M."/>
            <person name="Weissenbach J."/>
            <person name="Williams S.M."/>
            <person name="Woodage T."/>
            <person name="Worley K.C."/>
            <person name="Wu D."/>
            <person name="Yang S."/>
            <person name="Yao Q.A."/>
            <person name="Ye J."/>
            <person name="Yeh R.-F."/>
            <person name="Zaveri J.S."/>
            <person name="Zhan M."/>
            <person name="Zhang G."/>
            <person name="Zhao Q."/>
            <person name="Zheng L."/>
            <person name="Zheng X.H."/>
            <person name="Zhong F.N."/>
            <person name="Zhong W."/>
            <person name="Zhou X."/>
            <person name="Zhu S.C."/>
            <person name="Zhu X."/>
            <person name="Smith H.O."/>
            <person name="Gibbs R.A."/>
            <person name="Myers E.W."/>
            <person name="Rubin G.M."/>
            <person name="Venter J.C."/>
        </authorList>
    </citation>
    <scope>NUCLEOTIDE SEQUENCE [LARGE SCALE GENOMIC DNA]</scope>
    <source>
        <strain>Berkeley</strain>
    </source>
</reference>
<reference key="3">
    <citation type="journal article" date="2002" name="Genome Biol.">
        <title>Annotation of the Drosophila melanogaster euchromatic genome: a systematic review.</title>
        <authorList>
            <person name="Misra S."/>
            <person name="Crosby M.A."/>
            <person name="Mungall C.J."/>
            <person name="Matthews B.B."/>
            <person name="Campbell K.S."/>
            <person name="Hradecky P."/>
            <person name="Huang Y."/>
            <person name="Kaminker J.S."/>
            <person name="Millburn G.H."/>
            <person name="Prochnik S.E."/>
            <person name="Smith C.D."/>
            <person name="Tupy J.L."/>
            <person name="Whitfield E.J."/>
            <person name="Bayraktaroglu L."/>
            <person name="Berman B.P."/>
            <person name="Bettencourt B.R."/>
            <person name="Celniker S.E."/>
            <person name="de Grey A.D.N.J."/>
            <person name="Drysdale R.A."/>
            <person name="Harris N.L."/>
            <person name="Richter J."/>
            <person name="Russo S."/>
            <person name="Schroeder A.J."/>
            <person name="Shu S.Q."/>
            <person name="Stapleton M."/>
            <person name="Yamada C."/>
            <person name="Ashburner M."/>
            <person name="Gelbart W.M."/>
            <person name="Rubin G.M."/>
            <person name="Lewis S.E."/>
        </authorList>
    </citation>
    <scope>GENOME REANNOTATION</scope>
    <source>
        <strain>Berkeley</strain>
    </source>
</reference>
<reference key="4">
    <citation type="journal article" date="2002" name="Genome Biol.">
        <title>A Drosophila full-length cDNA resource.</title>
        <authorList>
            <person name="Stapleton M."/>
            <person name="Carlson J.W."/>
            <person name="Brokstein P."/>
            <person name="Yu C."/>
            <person name="Champe M."/>
            <person name="George R.A."/>
            <person name="Guarin H."/>
            <person name="Kronmiller B."/>
            <person name="Pacleb J.M."/>
            <person name="Park S."/>
            <person name="Wan K.H."/>
            <person name="Rubin G.M."/>
            <person name="Celniker S.E."/>
        </authorList>
    </citation>
    <scope>NUCLEOTIDE SEQUENCE [LARGE SCALE MRNA] (ISOFORMS 2 AND 4)</scope>
    <source>
        <strain>Berkeley</strain>
        <tissue>Head</tissue>
    </source>
</reference>
<reference key="5">
    <citation type="journal article" date="2007" name="Glycobiology">
        <title>Identification of N-glycosylated proteins from the central nervous system of Drosophila melanogaster.</title>
        <authorList>
            <person name="Koles K."/>
            <person name="Lim J.-M."/>
            <person name="Aoki K."/>
            <person name="Porterfield M."/>
            <person name="Tiemeyer M."/>
            <person name="Wells L."/>
            <person name="Panin V."/>
        </authorList>
    </citation>
    <scope>GLYCOSYLATION [LARGE SCALE ANALYSIS] AT ASN-320</scope>
    <scope>IDENTIFICATION BY MASS SPECTROMETRY</scope>
    <source>
        <strain>Oregon-R</strain>
        <tissue>Head</tissue>
    </source>
</reference>
<sequence>MFEENNSPTTDNSLWTLQGRQRASPAQRLHNLTSAGSSTSSSGLPLPQNIFTNPAIQPSSVINLNHSTDVVIGPMTQYQGPVSIYYMDYMEAHAMQTAAGINSNNANGNGNANRSRDKSPSRRVTRNTILLITLILLVLATGLIVLYVELNRPKPELPSNKAIYFGNNYDHQTFPNLGNGHLVVDREQWGASKNSHGLTIPLKRPIPYVLITHIGVQSLPCDNIYKCSIKMRTIQDSAIAEKGLPDIQSNFYVSEEGNIYVGRGWDWANTYANQTLAITFMGDYGRFKPGPKQLEGVQFLLAHAVANRNIDVDYKLVAQNQTKVTRSPGAYVYQEIRNWPHFYGCGMDEAPACGIELGMKTESWDAKQ</sequence>
<dbReference type="EMBL" id="AF207535">
    <property type="protein sequence ID" value="AAG23729.1"/>
    <property type="molecule type" value="mRNA"/>
</dbReference>
<dbReference type="EMBL" id="AF207536">
    <property type="protein sequence ID" value="AAG23730.1"/>
    <property type="molecule type" value="mRNA"/>
</dbReference>
<dbReference type="EMBL" id="AF313393">
    <property type="protein sequence ID" value="AAK00295.1"/>
    <property type="molecule type" value="mRNA"/>
</dbReference>
<dbReference type="EMBL" id="AE014296">
    <property type="protein sequence ID" value="AAF50303.2"/>
    <property type="molecule type" value="Genomic_DNA"/>
</dbReference>
<dbReference type="EMBL" id="AE014296">
    <property type="protein sequence ID" value="AAF50304.2"/>
    <property type="molecule type" value="Genomic_DNA"/>
</dbReference>
<dbReference type="EMBL" id="AE014296">
    <property type="protein sequence ID" value="AAS65050.1"/>
    <property type="molecule type" value="Genomic_DNA"/>
</dbReference>
<dbReference type="EMBL" id="AE014296">
    <property type="protein sequence ID" value="AAS65051.1"/>
    <property type="molecule type" value="Genomic_DNA"/>
</dbReference>
<dbReference type="EMBL" id="AY060314">
    <property type="protein sequence ID" value="AAL25353.1"/>
    <property type="molecule type" value="mRNA"/>
</dbReference>
<dbReference type="EMBL" id="BT001411">
    <property type="protein sequence ID" value="AAN71166.1"/>
    <property type="molecule type" value="mRNA"/>
</dbReference>
<dbReference type="RefSeq" id="NP_001261623.1">
    <molecule id="Q95T64-3"/>
    <property type="nucleotide sequence ID" value="NM_001274694.1"/>
</dbReference>
<dbReference type="RefSeq" id="NP_996026.1">
    <molecule id="Q95T64-1"/>
    <property type="nucleotide sequence ID" value="NM_206304.2"/>
</dbReference>
<dbReference type="RefSeq" id="NP_996027.1">
    <molecule id="Q95T64-4"/>
    <property type="nucleotide sequence ID" value="NM_206305.2"/>
</dbReference>
<dbReference type="RefSeq" id="NP_996028.1">
    <molecule id="Q95T64-3"/>
    <property type="nucleotide sequence ID" value="NM_206306.2"/>
</dbReference>
<dbReference type="RefSeq" id="NP_996029.1">
    <molecule id="Q95T64-2"/>
    <property type="nucleotide sequence ID" value="NM_206307.2"/>
</dbReference>
<dbReference type="SMR" id="Q95T64"/>
<dbReference type="BioGRID" id="64459">
    <property type="interactions" value="6"/>
</dbReference>
<dbReference type="FunCoup" id="Q95T64">
    <property type="interactions" value="242"/>
</dbReference>
<dbReference type="IntAct" id="Q95T64">
    <property type="interactions" value="9"/>
</dbReference>
<dbReference type="STRING" id="7227.FBpp0076164"/>
<dbReference type="GlyCosmos" id="Q95T64">
    <property type="glycosylation" value="2 sites, No reported glycans"/>
</dbReference>
<dbReference type="GlyGen" id="Q95T64">
    <property type="glycosylation" value="2 sites"/>
</dbReference>
<dbReference type="iPTMnet" id="Q95T64"/>
<dbReference type="PaxDb" id="7227-FBpp0076164"/>
<dbReference type="DNASU" id="39062"/>
<dbReference type="EnsemblMetazoa" id="FBtr0076432">
    <molecule id="Q95T64-2"/>
    <property type="protein sequence ID" value="FBpp0076161"/>
    <property type="gene ID" value="FBgn0035975"/>
</dbReference>
<dbReference type="EnsemblMetazoa" id="FBtr0076433">
    <molecule id="Q95T64-3"/>
    <property type="protein sequence ID" value="FBpp0076162"/>
    <property type="gene ID" value="FBgn0035975"/>
</dbReference>
<dbReference type="EnsemblMetazoa" id="FBtr0076434">
    <molecule id="Q95T64-4"/>
    <property type="protein sequence ID" value="FBpp0076163"/>
    <property type="gene ID" value="FBgn0035975"/>
</dbReference>
<dbReference type="EnsemblMetazoa" id="FBtr0076435">
    <molecule id="Q95T64-1"/>
    <property type="protein sequence ID" value="FBpp0076164"/>
    <property type="gene ID" value="FBgn0035975"/>
</dbReference>
<dbReference type="EnsemblMetazoa" id="FBtr0333882">
    <molecule id="Q95T64-3"/>
    <property type="protein sequence ID" value="FBpp0306014"/>
    <property type="gene ID" value="FBgn0035975"/>
</dbReference>
<dbReference type="GeneID" id="39062"/>
<dbReference type="KEGG" id="dme:Dmel_CG32042"/>
<dbReference type="AGR" id="FB:FBgn0035975"/>
<dbReference type="CTD" id="39062"/>
<dbReference type="FlyBase" id="FBgn0035975">
    <property type="gene designation" value="PGRP-LA"/>
</dbReference>
<dbReference type="VEuPathDB" id="VectorBase:FBgn0035975"/>
<dbReference type="eggNOG" id="ENOG502S2KY">
    <property type="taxonomic scope" value="Eukaryota"/>
</dbReference>
<dbReference type="InParanoid" id="Q95T64"/>
<dbReference type="OMA" id="GVQSQPC"/>
<dbReference type="OrthoDB" id="10001926at2759"/>
<dbReference type="PhylomeDB" id="Q95T64"/>
<dbReference type="SignaLink" id="Q95T64"/>
<dbReference type="BioGRID-ORCS" id="39062">
    <property type="hits" value="0 hits in 3 CRISPR screens"/>
</dbReference>
<dbReference type="GenomeRNAi" id="39062"/>
<dbReference type="PRO" id="PR:Q95T64"/>
<dbReference type="Proteomes" id="UP000000803">
    <property type="component" value="Chromosome 3L"/>
</dbReference>
<dbReference type="Bgee" id="FBgn0035975">
    <property type="expression patterns" value="Expressed in hemocyte (sensu Nematoda and Protostomia) in haltere and 115 other cell types or tissues"/>
</dbReference>
<dbReference type="ExpressionAtlas" id="Q95T64">
    <property type="expression patterns" value="baseline and differential"/>
</dbReference>
<dbReference type="GO" id="GO:0005886">
    <property type="term" value="C:plasma membrane"/>
    <property type="evidence" value="ECO:0000303"/>
    <property type="project" value="UniProtKB"/>
</dbReference>
<dbReference type="GO" id="GO:0008270">
    <property type="term" value="F:zinc ion binding"/>
    <property type="evidence" value="ECO:0007669"/>
    <property type="project" value="InterPro"/>
</dbReference>
<dbReference type="GO" id="GO:0050829">
    <property type="term" value="P:defense response to Gram-negative bacterium"/>
    <property type="evidence" value="ECO:0000270"/>
    <property type="project" value="FlyBase"/>
</dbReference>
<dbReference type="GO" id="GO:0006955">
    <property type="term" value="P:immune response"/>
    <property type="evidence" value="ECO:0000250"/>
    <property type="project" value="FlyBase"/>
</dbReference>
<dbReference type="GO" id="GO:0045087">
    <property type="term" value="P:innate immune response"/>
    <property type="evidence" value="ECO:0000303"/>
    <property type="project" value="UniProtKB"/>
</dbReference>
<dbReference type="GO" id="GO:0061059">
    <property type="term" value="P:positive regulation of peptidoglycan recognition protein signaling pathway"/>
    <property type="evidence" value="ECO:0000315"/>
    <property type="project" value="FlyBase"/>
</dbReference>
<dbReference type="GO" id="GO:0009617">
    <property type="term" value="P:response to bacterium"/>
    <property type="evidence" value="ECO:0000314"/>
    <property type="project" value="FlyBase"/>
</dbReference>
<dbReference type="CDD" id="cd06583">
    <property type="entry name" value="PGRP"/>
    <property type="match status" value="1"/>
</dbReference>
<dbReference type="Gene3D" id="3.40.80.10">
    <property type="entry name" value="Peptidoglycan recognition protein-like"/>
    <property type="match status" value="1"/>
</dbReference>
<dbReference type="InterPro" id="IPR036505">
    <property type="entry name" value="Amidase/PGRP_sf"/>
</dbReference>
<dbReference type="InterPro" id="IPR002502">
    <property type="entry name" value="Amidase_domain"/>
</dbReference>
<dbReference type="InterPro" id="IPR015510">
    <property type="entry name" value="PGRP"/>
</dbReference>
<dbReference type="InterPro" id="IPR006619">
    <property type="entry name" value="PGRP_domain_met/bac"/>
</dbReference>
<dbReference type="PANTHER" id="PTHR11022">
    <property type="entry name" value="PEPTIDOGLYCAN RECOGNITION PROTEIN"/>
    <property type="match status" value="1"/>
</dbReference>
<dbReference type="PANTHER" id="PTHR11022:SF76">
    <property type="entry name" value="PEPTIDOGLYCAN-RECOGNITION PROTEIN LA"/>
    <property type="match status" value="1"/>
</dbReference>
<dbReference type="Pfam" id="PF01510">
    <property type="entry name" value="Amidase_2"/>
    <property type="match status" value="1"/>
</dbReference>
<dbReference type="SMART" id="SM00701">
    <property type="entry name" value="PGRP"/>
    <property type="match status" value="1"/>
</dbReference>
<dbReference type="SUPFAM" id="SSF55846">
    <property type="entry name" value="N-acetylmuramoyl-L-alanine amidase-like"/>
    <property type="match status" value="1"/>
</dbReference>
<gene>
    <name type="primary">PGRP-LA</name>
    <name type="ORF">CG32042</name>
</gene>
<accession>Q95T64</accession>
<accession>Q9BLX5</accession>
<accession>Q9GNK6</accession>
<accession>Q9GNK7</accession>
<accession>Q9VSV7</accession>
<accession>Q9VSV8</accession>